<protein>
    <recommendedName>
        <fullName evidence="1">Threonylcarbamoyl-AMP synthase</fullName>
        <shortName evidence="1">TC-AMP synthase</shortName>
        <ecNumber evidence="1">2.7.7.87</ecNumber>
    </recommendedName>
    <alternativeName>
        <fullName evidence="1">L-threonylcarbamoyladenylate synthase</fullName>
    </alternativeName>
    <alternativeName>
        <fullName evidence="1">t(6)A37 threonylcarbamoyladenosine biosynthesis protein TsaC</fullName>
    </alternativeName>
    <alternativeName>
        <fullName evidence="1">tRNA threonylcarbamoyladenosine biosynthesis protein TsaC</fullName>
    </alternativeName>
</protein>
<dbReference type="EC" id="2.7.7.87" evidence="1"/>
<dbReference type="EMBL" id="CP001085">
    <property type="protein sequence ID" value="ADD79703.1"/>
    <property type="molecule type" value="Genomic_DNA"/>
</dbReference>
<dbReference type="RefSeq" id="WP_013087690.1">
    <property type="nucleotide sequence ID" value="NC_014109.1"/>
</dbReference>
<dbReference type="SMR" id="D4G8K6"/>
<dbReference type="STRING" id="515618.RIEPE_0421"/>
<dbReference type="KEGG" id="rip:RIEPE_0421"/>
<dbReference type="eggNOG" id="COG0009">
    <property type="taxonomic scope" value="Bacteria"/>
</dbReference>
<dbReference type="HOGENOM" id="CLU_031397_6_0_6"/>
<dbReference type="OrthoDB" id="9814580at2"/>
<dbReference type="Proteomes" id="UP000001700">
    <property type="component" value="Chromosome"/>
</dbReference>
<dbReference type="GO" id="GO:0005737">
    <property type="term" value="C:cytoplasm"/>
    <property type="evidence" value="ECO:0007669"/>
    <property type="project" value="UniProtKB-SubCell"/>
</dbReference>
<dbReference type="GO" id="GO:0005524">
    <property type="term" value="F:ATP binding"/>
    <property type="evidence" value="ECO:0007669"/>
    <property type="project" value="UniProtKB-UniRule"/>
</dbReference>
<dbReference type="GO" id="GO:0003725">
    <property type="term" value="F:double-stranded RNA binding"/>
    <property type="evidence" value="ECO:0007669"/>
    <property type="project" value="InterPro"/>
</dbReference>
<dbReference type="GO" id="GO:0061710">
    <property type="term" value="F:L-threonylcarbamoyladenylate synthase"/>
    <property type="evidence" value="ECO:0007669"/>
    <property type="project" value="UniProtKB-EC"/>
</dbReference>
<dbReference type="GO" id="GO:0000049">
    <property type="term" value="F:tRNA binding"/>
    <property type="evidence" value="ECO:0007669"/>
    <property type="project" value="TreeGrafter"/>
</dbReference>
<dbReference type="GO" id="GO:0006450">
    <property type="term" value="P:regulation of translational fidelity"/>
    <property type="evidence" value="ECO:0007669"/>
    <property type="project" value="TreeGrafter"/>
</dbReference>
<dbReference type="GO" id="GO:0002949">
    <property type="term" value="P:tRNA threonylcarbamoyladenosine modification"/>
    <property type="evidence" value="ECO:0007669"/>
    <property type="project" value="UniProtKB-UniRule"/>
</dbReference>
<dbReference type="Gene3D" id="3.90.870.10">
    <property type="entry name" value="DHBP synthase"/>
    <property type="match status" value="1"/>
</dbReference>
<dbReference type="HAMAP" id="MF_01852">
    <property type="entry name" value="TsaC"/>
    <property type="match status" value="1"/>
</dbReference>
<dbReference type="InterPro" id="IPR017945">
    <property type="entry name" value="DHBP_synth_RibB-like_a/b_dom"/>
</dbReference>
<dbReference type="InterPro" id="IPR006070">
    <property type="entry name" value="Sua5-like_dom"/>
</dbReference>
<dbReference type="InterPro" id="IPR023535">
    <property type="entry name" value="TC-AMP_synthase"/>
</dbReference>
<dbReference type="InterPro" id="IPR050156">
    <property type="entry name" value="TC-AMP_synthase_SUA5"/>
</dbReference>
<dbReference type="PANTHER" id="PTHR17490">
    <property type="entry name" value="SUA5"/>
    <property type="match status" value="1"/>
</dbReference>
<dbReference type="PANTHER" id="PTHR17490:SF18">
    <property type="entry name" value="THREONYLCARBAMOYL-AMP SYNTHASE"/>
    <property type="match status" value="1"/>
</dbReference>
<dbReference type="Pfam" id="PF01300">
    <property type="entry name" value="Sua5_yciO_yrdC"/>
    <property type="match status" value="1"/>
</dbReference>
<dbReference type="SUPFAM" id="SSF55821">
    <property type="entry name" value="YrdC/RibB"/>
    <property type="match status" value="1"/>
</dbReference>
<dbReference type="PROSITE" id="PS51163">
    <property type="entry name" value="YRDC"/>
    <property type="match status" value="1"/>
</dbReference>
<keyword id="KW-0067">ATP-binding</keyword>
<keyword id="KW-0963">Cytoplasm</keyword>
<keyword id="KW-0547">Nucleotide-binding</keyword>
<keyword id="KW-0548">Nucleotidyltransferase</keyword>
<keyword id="KW-0808">Transferase</keyword>
<keyword id="KW-0819">tRNA processing</keyword>
<accession>D4G8K6</accession>
<name>TSAC_RIEPU</name>
<feature type="chain" id="PRO_0000403980" description="Threonylcarbamoyl-AMP synthase">
    <location>
        <begin position="1"/>
        <end position="187"/>
    </location>
</feature>
<feature type="domain" description="YrdC-like" evidence="1">
    <location>
        <begin position="3"/>
        <end position="187"/>
    </location>
</feature>
<organism>
    <name type="scientific">Riesia pediculicola (strain USDA)</name>
    <dbReference type="NCBI Taxonomy" id="515618"/>
    <lineage>
        <taxon>Bacteria</taxon>
        <taxon>Pseudomonadati</taxon>
        <taxon>Pseudomonadota</taxon>
        <taxon>Gammaproteobacteria</taxon>
        <taxon>Enterobacterales</taxon>
        <taxon>Enterobacteriaceae</taxon>
        <taxon>Candidatus Riesia</taxon>
    </lineage>
</organism>
<sequence length="187" mass="21622">MKNSELLKIIWALKNGEIIAYPAESVFSLGCDPDNDKTIQKLLTLKNRSWEKGFILVSDNYDKLTKYIDDKKLTKFQKRIISFHDTFFPRTWVVPAKKCVSKLITGQFKSIAIRISRFEYIKNICLNYGKPIISTSANISNDAPCRTKNEVAKKFNQCVRTMNGKTLGNFQHSIVQDLLNGYLYRKR</sequence>
<proteinExistence type="inferred from homology"/>
<reference key="1">
    <citation type="submission" date="2008-05" db="EMBL/GenBank/DDBJ databases">
        <title>Genome sequence of Riesia pediculicola USDA.</title>
        <authorList>
            <person name="Kirkness E.F."/>
        </authorList>
    </citation>
    <scope>NUCLEOTIDE SEQUENCE [LARGE SCALE GENOMIC DNA]</scope>
    <source>
        <strain>USDA</strain>
    </source>
</reference>
<gene>
    <name evidence="1" type="primary">tsaC</name>
    <name type="synonym">rimN</name>
    <name type="ordered locus">RIEPE_0421</name>
</gene>
<evidence type="ECO:0000255" key="1">
    <source>
        <dbReference type="HAMAP-Rule" id="MF_01852"/>
    </source>
</evidence>
<comment type="function">
    <text evidence="1">Required for the formation of a threonylcarbamoyl group on adenosine at position 37 (t(6)A37) in tRNAs that read codons beginning with adenine. Catalyzes the conversion of L-threonine, HCO(3)(-)/CO(2) and ATP to give threonylcarbamoyl-AMP (TC-AMP) as the acyladenylate intermediate, with the release of diphosphate.</text>
</comment>
<comment type="catalytic activity">
    <reaction evidence="1">
        <text>L-threonine + hydrogencarbonate + ATP = L-threonylcarbamoyladenylate + diphosphate + H2O</text>
        <dbReference type="Rhea" id="RHEA:36407"/>
        <dbReference type="ChEBI" id="CHEBI:15377"/>
        <dbReference type="ChEBI" id="CHEBI:17544"/>
        <dbReference type="ChEBI" id="CHEBI:30616"/>
        <dbReference type="ChEBI" id="CHEBI:33019"/>
        <dbReference type="ChEBI" id="CHEBI:57926"/>
        <dbReference type="ChEBI" id="CHEBI:73682"/>
        <dbReference type="EC" id="2.7.7.87"/>
    </reaction>
</comment>
<comment type="subcellular location">
    <subcellularLocation>
        <location evidence="1">Cytoplasm</location>
    </subcellularLocation>
</comment>
<comment type="similarity">
    <text evidence="1">Belongs to the SUA5 family. TsaC subfamily.</text>
</comment>